<keyword id="KW-0002">3D-structure</keyword>
<keyword id="KW-0328">Glycosyltransferase</keyword>
<keyword id="KW-0414">Isoprene biosynthesis</keyword>
<keyword id="KW-0808">Transferase</keyword>
<accession>A0A0A6ZFY4</accession>
<accession>A0A0D5ZDH7</accession>
<proteinExistence type="evidence at protein level"/>
<gene>
    <name evidence="7" type="primary">UGT29</name>
    <name evidence="6" type="synonym">UGT94B1</name>
    <name evidence="8" type="synonym">UGT94Q2</name>
</gene>
<dbReference type="EC" id="2.4.1.365" evidence="3 4"/>
<dbReference type="EMBL" id="JX898530">
    <property type="protein sequence ID" value="AGR44632.1"/>
    <property type="molecule type" value="Genomic_DNA"/>
</dbReference>
<dbReference type="EMBL" id="KM401911">
    <property type="protein sequence ID" value="AKA44579.1"/>
    <property type="molecule type" value="mRNA"/>
</dbReference>
<dbReference type="PDB" id="8JZQ">
    <property type="method" value="X-ray"/>
    <property type="resolution" value="2.89 A"/>
    <property type="chains" value="A/B/C/D=1-442"/>
</dbReference>
<dbReference type="PDB" id="8K08">
    <property type="method" value="X-ray"/>
    <property type="resolution" value="3.50 A"/>
    <property type="chains" value="A/B=1-442"/>
</dbReference>
<dbReference type="PDB" id="8K09">
    <property type="method" value="X-ray"/>
    <property type="resolution" value="3.36 A"/>
    <property type="chains" value="A/C=1-442"/>
</dbReference>
<dbReference type="PDBsum" id="8JZQ"/>
<dbReference type="PDBsum" id="8K08"/>
<dbReference type="PDBsum" id="8K09"/>
<dbReference type="SMR" id="A0A0A6ZFY4"/>
<dbReference type="KEGG" id="ag:AGR44632"/>
<dbReference type="BioCyc" id="MetaCyc:MONOMER-20534"/>
<dbReference type="BRENDA" id="2.4.1.365">
    <property type="organism ID" value="7895"/>
</dbReference>
<dbReference type="UniPathway" id="UPA00213"/>
<dbReference type="GO" id="GO:0008194">
    <property type="term" value="F:UDP-glycosyltransferase activity"/>
    <property type="evidence" value="ECO:0000314"/>
    <property type="project" value="UniProtKB"/>
</dbReference>
<dbReference type="GO" id="GO:0002238">
    <property type="term" value="P:response to molecule of fungal origin"/>
    <property type="evidence" value="ECO:0000270"/>
    <property type="project" value="UniProtKB"/>
</dbReference>
<dbReference type="GO" id="GO:0016135">
    <property type="term" value="P:saponin biosynthetic process"/>
    <property type="evidence" value="ECO:0000314"/>
    <property type="project" value="UniProtKB"/>
</dbReference>
<dbReference type="GO" id="GO:0046246">
    <property type="term" value="P:terpene biosynthetic process"/>
    <property type="evidence" value="ECO:0000314"/>
    <property type="project" value="UniProtKB"/>
</dbReference>
<dbReference type="GO" id="GO:0016114">
    <property type="term" value="P:terpenoid biosynthetic process"/>
    <property type="evidence" value="ECO:0007669"/>
    <property type="project" value="UniProtKB-UniPathway"/>
</dbReference>
<dbReference type="CDD" id="cd03784">
    <property type="entry name" value="GT1_Gtf-like"/>
    <property type="match status" value="1"/>
</dbReference>
<dbReference type="FunFam" id="3.40.50.2000:FF:000060">
    <property type="entry name" value="Glycosyltransferase"/>
    <property type="match status" value="1"/>
</dbReference>
<dbReference type="Gene3D" id="3.40.50.2000">
    <property type="entry name" value="Glycogen Phosphorylase B"/>
    <property type="match status" value="2"/>
</dbReference>
<dbReference type="InterPro" id="IPR002213">
    <property type="entry name" value="UDP_glucos_trans"/>
</dbReference>
<dbReference type="InterPro" id="IPR035595">
    <property type="entry name" value="UDP_glycos_trans_CS"/>
</dbReference>
<dbReference type="PANTHER" id="PTHR48044">
    <property type="entry name" value="GLYCOSYLTRANSFERASE"/>
    <property type="match status" value="1"/>
</dbReference>
<dbReference type="PANTHER" id="PTHR48044:SF29">
    <property type="entry name" value="GLYCOSYLTRANSFERASE"/>
    <property type="match status" value="1"/>
</dbReference>
<dbReference type="Pfam" id="PF00201">
    <property type="entry name" value="UDPGT"/>
    <property type="match status" value="1"/>
</dbReference>
<dbReference type="SUPFAM" id="SSF53756">
    <property type="entry name" value="UDP-Glycosyltransferase/glycogen phosphorylase"/>
    <property type="match status" value="1"/>
</dbReference>
<dbReference type="PROSITE" id="PS00375">
    <property type="entry name" value="UDPGT"/>
    <property type="match status" value="1"/>
</dbReference>
<protein>
    <recommendedName>
        <fullName evidence="7">UDP-glucosyltransferase 29</fullName>
        <shortName evidence="7 10">UGTPg29</shortName>
        <ecNumber evidence="3 4">2.4.1.365</ecNumber>
    </recommendedName>
    <alternativeName>
        <fullName evidence="6">UDP-glucosyltransferase 94B1</fullName>
        <shortName evidence="6">PgUGT94B1</shortName>
    </alternativeName>
    <alternativeName>
        <fullName evidence="8">UDP-glucosyltransferase 94Q2</fullName>
        <shortName evidence="10">PgUGT94Q2</shortName>
    </alternativeName>
</protein>
<reference key="1">
    <citation type="journal article" date="2014" name="Plant Cell Physiol.">
        <title>Two ginseng UDP-glycosyltransferases synthesize ginsenoside Rg3 and Rd.</title>
        <authorList>
            <person name="Jung S.-C."/>
            <person name="Kim W."/>
            <person name="Park S.C."/>
            <person name="Jeong J."/>
            <person name="Park M.K."/>
            <person name="Lim S."/>
            <person name="Lee Y."/>
            <person name="Im W.-T."/>
            <person name="Lee J.H."/>
            <person name="Choi G."/>
            <person name="Kim S.C."/>
        </authorList>
    </citation>
    <scope>NUCLEOTIDE SEQUENCE [GENOMIC DNA]</scope>
    <scope>FUNCTION</scope>
    <scope>CATALYTIC ACTIVITY</scope>
    <scope>TISSUE SPECIFICITY</scope>
    <scope>BIOPHYSICOCHEMICAL PROPERTIES</scope>
    <scope>INDUCTION BY METHYL JASMONATE</scope>
</reference>
<reference key="2">
    <citation type="journal article" date="2015" name="Metab. Eng.">
        <title>Production of bioactive ginsenosides Rh2 and Rg3 by metabolically engineered yeasts.</title>
        <authorList>
            <person name="Wang P."/>
            <person name="Wei Y."/>
            <person name="Fan Y."/>
            <person name="Liu Q."/>
            <person name="Wei W."/>
            <person name="Yang C."/>
            <person name="Zhang L."/>
            <person name="Zhao G."/>
            <person name="Yue J."/>
            <person name="Yan X."/>
            <person name="Zhou Z."/>
        </authorList>
    </citation>
    <scope>NUCLEOTIDE SEQUENCE [MRNA]</scope>
    <scope>FUNCTION</scope>
    <scope>CATALYTIC ACTIVITY</scope>
    <scope>BIOPHYSICOCHEMICAL PROPERTIES</scope>
</reference>
<reference key="3">
    <citation type="journal article" date="2016" name="J. Biotechnol.">
        <title>Fungal elicitors enhance ginsenosides biosynthesis, expression of functional genes as well as signal molecules accumulation in adventitious roots of Panax ginseng C. A. Mey.</title>
        <authorList>
            <person name="Li J."/>
            <person name="Liu S."/>
            <person name="Wang J."/>
            <person name="Li J."/>
            <person name="Liu D."/>
            <person name="Li J."/>
            <person name="Gao W."/>
        </authorList>
    </citation>
    <scope>FUNCTION</scope>
    <scope>INDUCTION BY ASPERGILLUS NIGER</scope>
</reference>
<reference key="4">
    <citation type="journal article" date="2018" name="Biotechnol. Appl. Biochem.">
        <title>Advances in ginsenoside biosynthesis and metabolic regulation.</title>
        <authorList>
            <person name="Lu J."/>
            <person name="Li J."/>
            <person name="Wang S."/>
            <person name="Yao L."/>
            <person name="Liang W."/>
            <person name="Wang J."/>
            <person name="Gao W."/>
        </authorList>
    </citation>
    <scope>REVIEW</scope>
</reference>
<reference key="5">
    <citation type="journal article" date="2018" name="Molecules">
        <title>Progress on the studies of the key enzymes of ginsenoside biosynthesis.</title>
        <authorList>
            <person name="Yang J.-L."/>
            <person name="Hu Z.-F."/>
            <person name="Zhang T.-T."/>
            <person name="Gu A.-D."/>
            <person name="Gong T."/>
            <person name="Zhu P."/>
        </authorList>
    </citation>
    <scope>REVIEW</scope>
    <scope>NOMENCLATURE</scope>
</reference>
<feature type="chain" id="PRO_0000446962" description="UDP-glucosyltransferase 29">
    <location>
        <begin position="1"/>
        <end position="442"/>
    </location>
</feature>
<feature type="active site" description="Proton acceptor" evidence="1">
    <location>
        <position position="20"/>
    </location>
</feature>
<feature type="active site" description="Charge relay" evidence="1">
    <location>
        <position position="116"/>
    </location>
</feature>
<feature type="binding site" evidence="2">
    <location>
        <position position="20"/>
    </location>
    <ligand>
        <name>an anthocyanidin</name>
        <dbReference type="ChEBI" id="CHEBI:143576"/>
    </ligand>
</feature>
<feature type="binding site" evidence="1">
    <location>
        <position position="138"/>
    </location>
    <ligand>
        <name>UDP-alpha-D-glucose</name>
        <dbReference type="ChEBI" id="CHEBI:58885"/>
    </ligand>
</feature>
<feature type="binding site" evidence="1">
    <location>
        <position position="318"/>
    </location>
    <ligand>
        <name>UDP-alpha-D-glucose</name>
        <dbReference type="ChEBI" id="CHEBI:58885"/>
    </ligand>
</feature>
<feature type="binding site" evidence="1">
    <location>
        <position position="320"/>
    </location>
    <ligand>
        <name>UDP-alpha-D-glucose</name>
        <dbReference type="ChEBI" id="CHEBI:58885"/>
    </ligand>
</feature>
<feature type="binding site" evidence="1">
    <location>
        <position position="335"/>
    </location>
    <ligand>
        <name>UDP-alpha-D-glucose</name>
        <dbReference type="ChEBI" id="CHEBI:58885"/>
    </ligand>
</feature>
<feature type="binding site" evidence="1">
    <location>
        <position position="338"/>
    </location>
    <ligand>
        <name>UDP-alpha-D-glucose</name>
        <dbReference type="ChEBI" id="CHEBI:58885"/>
    </ligand>
</feature>
<feature type="binding site" evidence="1">
    <location>
        <position position="340"/>
    </location>
    <ligand>
        <name>UDP-alpha-D-glucose</name>
        <dbReference type="ChEBI" id="CHEBI:58885"/>
    </ligand>
</feature>
<feature type="binding site" evidence="1">
    <location>
        <position position="343"/>
    </location>
    <ligand>
        <name>UDP-alpha-D-glucose</name>
        <dbReference type="ChEBI" id="CHEBI:58885"/>
    </ligand>
</feature>
<feature type="binding site" evidence="1">
    <location>
        <position position="359"/>
    </location>
    <ligand>
        <name>UDP-alpha-D-glucose</name>
        <dbReference type="ChEBI" id="CHEBI:58885"/>
    </ligand>
</feature>
<feature type="binding site" evidence="1">
    <location>
        <position position="360"/>
    </location>
    <ligand>
        <name>UDP-alpha-D-glucose</name>
        <dbReference type="ChEBI" id="CHEBI:58885"/>
    </ligand>
</feature>
<feature type="sequence conflict" description="In Ref. 2; AKA44579." evidence="11" ref="2">
    <original>N</original>
    <variation>K</variation>
    <location>
        <position position="5"/>
    </location>
</feature>
<name>UGT29_PANGI</name>
<organism>
    <name type="scientific">Panax ginseng</name>
    <name type="common">Korean ginseng</name>
    <dbReference type="NCBI Taxonomy" id="4054"/>
    <lineage>
        <taxon>Eukaryota</taxon>
        <taxon>Viridiplantae</taxon>
        <taxon>Streptophyta</taxon>
        <taxon>Embryophyta</taxon>
        <taxon>Tracheophyta</taxon>
        <taxon>Spermatophyta</taxon>
        <taxon>Magnoliopsida</taxon>
        <taxon>eudicotyledons</taxon>
        <taxon>Gunneridae</taxon>
        <taxon>Pentapetalae</taxon>
        <taxon>asterids</taxon>
        <taxon>campanulids</taxon>
        <taxon>Apiales</taxon>
        <taxon>Araliaceae</taxon>
        <taxon>Panax</taxon>
    </lineage>
</organism>
<evidence type="ECO:0000250" key="1">
    <source>
        <dbReference type="UniProtKB" id="A0A0A1HA03"/>
    </source>
</evidence>
<evidence type="ECO:0000250" key="2">
    <source>
        <dbReference type="UniProtKB" id="P51094"/>
    </source>
</evidence>
<evidence type="ECO:0000269" key="3">
    <source>
    </source>
</evidence>
<evidence type="ECO:0000269" key="4">
    <source>
    </source>
</evidence>
<evidence type="ECO:0000269" key="5">
    <source>
    </source>
</evidence>
<evidence type="ECO:0000303" key="6">
    <source>
    </source>
</evidence>
<evidence type="ECO:0000303" key="7">
    <source>
    </source>
</evidence>
<evidence type="ECO:0000303" key="8">
    <source>
    </source>
</evidence>
<evidence type="ECO:0000303" key="9">
    <source>
    </source>
</evidence>
<evidence type="ECO:0000303" key="10">
    <source>
    </source>
</evidence>
<evidence type="ECO:0000305" key="11"/>
<sequence length="442" mass="49133">MDNQNGRISIALLPFLAHGHISPFFELAKQLAKRNCNVFLCSTPINLSSIKDKDSSASIKLVELHLPSSPDLPPHYHTTNGLPSHLMLPLRNAFETAGPTFSEILKTLNPDLLIYDFNPSWAPEIASSHNIPAVYFLTTAAASSSIGLHAFKNPGEKYPFPDFYDNSNITPEPPSADNMKLLHDFIACFERSCDIILIKSFRELEGKYIDLLSTLSDKTLVPVGPLVQDPMGHNEDPKTEQIINWLDKRAESTVVFVCFGSEYFLSNEELEEVAIGLEISTVNFIWAVRLIEGEKKGILPEGFVQRVGDRGLVVEGWAPQARILGHSSTGGFVSHCGWSSIAESMKFGVPVIAMARHLDQPLNGKLAAEVGVGMEVVRDENGKYKREGIAEVIRKVVVEKSGEVIRRKARELSEKMKEKGEQEIDRALEELVQICKKKKDEQ</sequence>
<comment type="function">
    <text evidence="3 4 5 9">Component of the dammarane-type triterpene saponins (e.g. PPD-type ginsenosides or panaxosides) biosynthetic pathway (PubMed:25320211, PubMed:25769286, PubMed:27746309, PubMed:29378087). Glycosyltransferase that catalyzes the conversion of ginsenoside Rh2 to ginsenoside Rg3 (PubMed:25320211, PubMed:25769286, PubMed:27746309). Triggers the biosynthesis of ginsenoside Rd from ginsenoside F2 (PubMed:25320211).</text>
</comment>
<comment type="catalytic activity">
    <reaction evidence="3">
        <text>(20S)-ginsenoside F2 + UDP-alpha-D-glucose = (20S)-ginsenoside Rd + UDP + H(+)</text>
        <dbReference type="Rhea" id="RHEA:58004"/>
        <dbReference type="ChEBI" id="CHEBI:15378"/>
        <dbReference type="ChEBI" id="CHEBI:58223"/>
        <dbReference type="ChEBI" id="CHEBI:58885"/>
        <dbReference type="ChEBI" id="CHEBI:67988"/>
        <dbReference type="ChEBI" id="CHEBI:77145"/>
        <dbReference type="EC" id="2.4.1.365"/>
    </reaction>
    <physiologicalReaction direction="left-to-right" evidence="3">
        <dbReference type="Rhea" id="RHEA:58005"/>
    </physiologicalReaction>
</comment>
<comment type="catalytic activity">
    <reaction evidence="3 4">
        <text>(20S)-ginsenoside Rh2 + UDP-alpha-D-glucose = (20S)-ginsenoside Rg3 + UDP + H(+)</text>
        <dbReference type="Rhea" id="RHEA:58000"/>
        <dbReference type="ChEBI" id="CHEBI:15378"/>
        <dbReference type="ChEBI" id="CHEBI:58223"/>
        <dbReference type="ChEBI" id="CHEBI:58885"/>
        <dbReference type="ChEBI" id="CHEBI:67991"/>
        <dbReference type="ChEBI" id="CHEBI:77147"/>
        <dbReference type="EC" id="2.4.1.365"/>
    </reaction>
    <physiologicalReaction direction="left-to-right" evidence="3 4">
        <dbReference type="Rhea" id="RHEA:58001"/>
    </physiologicalReaction>
</comment>
<comment type="biophysicochemical properties">
    <kinetics>
        <KM evidence="4">149 uM for ginsenoside Rh2 (at pH 8 and 40 degrees Celsius)</KM>
        <KM evidence="3">311 uM for ginsenoside Rh2 (at pH 7 and 35 degrees Celsius)</KM>
        <KM evidence="3">188 uM for ginsenoside F2 (at pH 7 and 35 degrees Celsius)</KM>
        <Vmax evidence="4">25.0 nmol/min/mg enzyme with ginsenoside Rh2 as substrate (at pH 8 and 40 degrees Celsius)</Vmax>
        <text evidence="3 4">kcat is 8.6 sec(-1) with ginsenoside Rh2 as substrate (at pH 7 and 35 degrees Celsius). kcat is 0.41 sec(-1) with ginsenoside F2 as substrate (at pH 7 and 35 degrees Celsius) (PubMed:25320211). kcat is 1111 sec(-1) with ginsenoside Rh2 as substrate (at pH 8 and 40 degrees Celsius) (PubMed:25769286).</text>
    </kinetics>
</comment>
<comment type="pathway">
    <text evidence="11">Secondary metabolite biosynthesis; terpenoid biosynthesis.</text>
</comment>
<comment type="tissue specificity">
    <text evidence="3">Expressed at higher levels in roots than in leaves.</text>
</comment>
<comment type="induction">
    <text evidence="3 5">Induced by methyl jasmonate (MeJA) in roots and leaves (PubMed:25320211). Induced by A.niger mycelium-derived elicitor, thus improving ginsenosides production in adventitious roots culture (PubMed:27746309).</text>
</comment>
<comment type="similarity">
    <text evidence="11">Belongs to the UDP-glycosyltransferase family.</text>
</comment>